<protein>
    <recommendedName>
        <fullName evidence="1">Nickel import ATP-binding protein NikD</fullName>
        <ecNumber evidence="1">7.2.2.11</ecNumber>
    </recommendedName>
</protein>
<name>NIKD_BRUSU</name>
<keyword id="KW-0067">ATP-binding</keyword>
<keyword id="KW-0997">Cell inner membrane</keyword>
<keyword id="KW-1003">Cell membrane</keyword>
<keyword id="KW-0406">Ion transport</keyword>
<keyword id="KW-0472">Membrane</keyword>
<keyword id="KW-0533">Nickel</keyword>
<keyword id="KW-0921">Nickel transport</keyword>
<keyword id="KW-0547">Nucleotide-binding</keyword>
<keyword id="KW-1278">Translocase</keyword>
<keyword id="KW-0813">Transport</keyword>
<evidence type="ECO:0000255" key="1">
    <source>
        <dbReference type="HAMAP-Rule" id="MF_01711"/>
    </source>
</evidence>
<evidence type="ECO:0000269" key="2">
    <source>
    </source>
</evidence>
<evidence type="ECO:0000305" key="3"/>
<proteinExistence type="evidence at transcript level"/>
<accession>Q8FVM9</accession>
<accession>G0KDG7</accession>
<accession>Q9AL79</accession>
<organism>
    <name type="scientific">Brucella suis biovar 1 (strain 1330)</name>
    <dbReference type="NCBI Taxonomy" id="204722"/>
    <lineage>
        <taxon>Bacteria</taxon>
        <taxon>Pseudomonadati</taxon>
        <taxon>Pseudomonadota</taxon>
        <taxon>Alphaproteobacteria</taxon>
        <taxon>Hyphomicrobiales</taxon>
        <taxon>Brucellaceae</taxon>
        <taxon>Brucella/Ochrobactrum group</taxon>
        <taxon>Brucella</taxon>
    </lineage>
</organism>
<sequence>MTRKTLAIEGLTATTVIDGQQRVLVDNLSLGVQRGRILALVGASGSGKSMTCSAALGVLPPGVTASRGRVTIDGVPYAANALRGRHVATIMQNPRGAFNPVRTMRDHAIETLQALGKLSSNPQDQIVHCMRAAGLEDVKTILSLHPFEMSGGMLQRMMIALALLSEAPFLFADEPTTDLDLVVQLRVLELLEKLVEERDLGILLVTHDMGVVARLAHDVAVLDHGRLIEQAPVMDIFQTPGHEVTRMLVSAHLSLYGMELNA</sequence>
<feature type="chain" id="PRO_0000092619" description="Nickel import ATP-binding protein NikD">
    <location>
        <begin position="1"/>
        <end position="262"/>
    </location>
</feature>
<feature type="domain" description="ABC transporter" evidence="1">
    <location>
        <begin position="6"/>
        <end position="249"/>
    </location>
</feature>
<feature type="binding site" evidence="1">
    <location>
        <begin position="42"/>
        <end position="49"/>
    </location>
    <ligand>
        <name>ATP</name>
        <dbReference type="ChEBI" id="CHEBI:30616"/>
    </ligand>
</feature>
<gene>
    <name evidence="1" type="primary">nikD</name>
    <name type="ordered locus">BRA0801</name>
    <name type="ordered locus">BS1330_II0794</name>
</gene>
<reference key="1">
    <citation type="journal article" date="2001" name="J. Bacteriol.">
        <title>Identification of the nik gene cluster of Brucella suis: regulation and contribution to urease activity.</title>
        <authorList>
            <person name="Jubier-Maurin V."/>
            <person name="Rodrigue A."/>
            <person name="Ouahrani-Bettache S."/>
            <person name="Layssac M."/>
            <person name="Mandrand-Berthelot M.-A."/>
            <person name="Koehler S."/>
            <person name="Liautard J.-P."/>
        </authorList>
    </citation>
    <scope>NUCLEOTIDE SEQUENCE [GENOMIC DNA]</scope>
    <scope>INDUCTION</scope>
    <source>
        <strain>1330</strain>
    </source>
</reference>
<reference key="2">
    <citation type="journal article" date="2002" name="Proc. Natl. Acad. Sci. U.S.A.">
        <title>The Brucella suis genome reveals fundamental similarities between animal and plant pathogens and symbionts.</title>
        <authorList>
            <person name="Paulsen I.T."/>
            <person name="Seshadri R."/>
            <person name="Nelson K.E."/>
            <person name="Eisen J.A."/>
            <person name="Heidelberg J.F."/>
            <person name="Read T.D."/>
            <person name="Dodson R.J."/>
            <person name="Umayam L.A."/>
            <person name="Brinkac L.M."/>
            <person name="Beanan M.J."/>
            <person name="Daugherty S.C."/>
            <person name="DeBoy R.T."/>
            <person name="Durkin A.S."/>
            <person name="Kolonay J.F."/>
            <person name="Madupu R."/>
            <person name="Nelson W.C."/>
            <person name="Ayodeji B."/>
            <person name="Kraul M."/>
            <person name="Shetty J."/>
            <person name="Malek J.A."/>
            <person name="Van Aken S.E."/>
            <person name="Riedmuller S."/>
            <person name="Tettelin H."/>
            <person name="Gill S.R."/>
            <person name="White O."/>
            <person name="Salzberg S.L."/>
            <person name="Hoover D.L."/>
            <person name="Lindler L.E."/>
            <person name="Halling S.M."/>
            <person name="Boyle S.M."/>
            <person name="Fraser C.M."/>
        </authorList>
    </citation>
    <scope>NUCLEOTIDE SEQUENCE [LARGE SCALE GENOMIC DNA]</scope>
    <source>
        <strain>1330</strain>
    </source>
</reference>
<reference key="3">
    <citation type="journal article" date="2011" name="J. Bacteriol.">
        <title>Revised genome sequence of Brucella suis 1330.</title>
        <authorList>
            <person name="Tae H."/>
            <person name="Shallom S."/>
            <person name="Settlage R."/>
            <person name="Preston D."/>
            <person name="Adams L.G."/>
            <person name="Garner H.R."/>
        </authorList>
    </citation>
    <scope>NUCLEOTIDE SEQUENCE [LARGE SCALE GENOMIC DNA]</scope>
    <source>
        <strain>1330</strain>
    </source>
</reference>
<comment type="function">
    <text evidence="1">Part of the ABC transporter complex NikABCDE involved in nickel import. Responsible for energy coupling to the transport system.</text>
</comment>
<comment type="catalytic activity">
    <reaction evidence="1">
        <text>Ni(2+)(out) + ATP + H2O = Ni(2+)(in) + ADP + phosphate + H(+)</text>
        <dbReference type="Rhea" id="RHEA:15557"/>
        <dbReference type="ChEBI" id="CHEBI:15377"/>
        <dbReference type="ChEBI" id="CHEBI:15378"/>
        <dbReference type="ChEBI" id="CHEBI:30616"/>
        <dbReference type="ChEBI" id="CHEBI:43474"/>
        <dbReference type="ChEBI" id="CHEBI:49786"/>
        <dbReference type="ChEBI" id="CHEBI:456216"/>
        <dbReference type="EC" id="7.2.2.11"/>
    </reaction>
</comment>
<comment type="subunit">
    <text evidence="1">The complex is composed of two ATP-binding proteins (NikD and NikE), two transmembrane proteins (NikB and NikC) and a solute-binding protein (NikA).</text>
</comment>
<comment type="subcellular location">
    <subcellularLocation>
        <location evidence="1">Cell inner membrane</location>
        <topology evidence="1">Peripheral membrane protein</topology>
    </subcellularLocation>
</comment>
<comment type="induction">
    <text evidence="2">Induced by low oxygen tension and metal ion deficiency. Repressed by NiCl(2) excess.</text>
</comment>
<comment type="similarity">
    <text evidence="1">Belongs to the ABC transporter superfamily. Nickel importer (TC 3.A.1.5.3) family.</text>
</comment>
<comment type="sequence caution" evidence="3">
    <conflict type="erroneous initiation">
        <sequence resource="EMBL-CDS" id="CAC24696"/>
    </conflict>
</comment>
<dbReference type="EC" id="7.2.2.11" evidence="1"/>
<dbReference type="EMBL" id="AJ278644">
    <property type="protein sequence ID" value="CAC24696.1"/>
    <property type="status" value="ALT_INIT"/>
    <property type="molecule type" value="Genomic_DNA"/>
</dbReference>
<dbReference type="EMBL" id="AE014292">
    <property type="protein sequence ID" value="AAN33979.1"/>
    <property type="molecule type" value="Genomic_DNA"/>
</dbReference>
<dbReference type="EMBL" id="CP002998">
    <property type="protein sequence ID" value="AEM20255.1"/>
    <property type="molecule type" value="Genomic_DNA"/>
</dbReference>
<dbReference type="RefSeq" id="WP_004690304.1">
    <property type="nucleotide sequence ID" value="NZ_KN046805.1"/>
</dbReference>
<dbReference type="SMR" id="Q8FVM9"/>
<dbReference type="GeneID" id="55592450"/>
<dbReference type="KEGG" id="bms:BRA0801"/>
<dbReference type="KEGG" id="bsi:BS1330_II0794"/>
<dbReference type="PATRIC" id="fig|204722.21.peg.3646"/>
<dbReference type="HOGENOM" id="CLU_000604_1_23_5"/>
<dbReference type="PhylomeDB" id="Q8FVM9"/>
<dbReference type="Proteomes" id="UP000007104">
    <property type="component" value="Chromosome II"/>
</dbReference>
<dbReference type="GO" id="GO:0005886">
    <property type="term" value="C:plasma membrane"/>
    <property type="evidence" value="ECO:0007669"/>
    <property type="project" value="UniProtKB-SubCell"/>
</dbReference>
<dbReference type="GO" id="GO:0015413">
    <property type="term" value="F:ABC-type nickel transporter activity"/>
    <property type="evidence" value="ECO:0007669"/>
    <property type="project" value="UniProtKB-EC"/>
</dbReference>
<dbReference type="GO" id="GO:0005524">
    <property type="term" value="F:ATP binding"/>
    <property type="evidence" value="ECO:0007669"/>
    <property type="project" value="UniProtKB-KW"/>
</dbReference>
<dbReference type="GO" id="GO:0016887">
    <property type="term" value="F:ATP hydrolysis activity"/>
    <property type="evidence" value="ECO:0007669"/>
    <property type="project" value="InterPro"/>
</dbReference>
<dbReference type="GO" id="GO:0016151">
    <property type="term" value="F:nickel cation binding"/>
    <property type="evidence" value="ECO:0007669"/>
    <property type="project" value="InterPro"/>
</dbReference>
<dbReference type="Gene3D" id="3.40.50.300">
    <property type="entry name" value="P-loop containing nucleotide triphosphate hydrolases"/>
    <property type="match status" value="1"/>
</dbReference>
<dbReference type="InterPro" id="IPR003593">
    <property type="entry name" value="AAA+_ATPase"/>
</dbReference>
<dbReference type="InterPro" id="IPR050388">
    <property type="entry name" value="ABC_Ni/Peptide_Import"/>
</dbReference>
<dbReference type="InterPro" id="IPR003439">
    <property type="entry name" value="ABC_transporter-like_ATP-bd"/>
</dbReference>
<dbReference type="InterPro" id="IPR017871">
    <property type="entry name" value="ABC_transporter-like_CS"/>
</dbReference>
<dbReference type="InterPro" id="IPR014138">
    <property type="entry name" value="Nickel_NikD"/>
</dbReference>
<dbReference type="InterPro" id="IPR027417">
    <property type="entry name" value="P-loop_NTPase"/>
</dbReference>
<dbReference type="NCBIfam" id="TIGR02770">
    <property type="entry name" value="nickel_nikD"/>
    <property type="match status" value="1"/>
</dbReference>
<dbReference type="PANTHER" id="PTHR43297:SF14">
    <property type="entry name" value="ATPASE AAA-TYPE CORE DOMAIN-CONTAINING PROTEIN"/>
    <property type="match status" value="1"/>
</dbReference>
<dbReference type="PANTHER" id="PTHR43297">
    <property type="entry name" value="OLIGOPEPTIDE TRANSPORT ATP-BINDING PROTEIN APPD"/>
    <property type="match status" value="1"/>
</dbReference>
<dbReference type="Pfam" id="PF00005">
    <property type="entry name" value="ABC_tran"/>
    <property type="match status" value="1"/>
</dbReference>
<dbReference type="SMART" id="SM00382">
    <property type="entry name" value="AAA"/>
    <property type="match status" value="1"/>
</dbReference>
<dbReference type="SUPFAM" id="SSF52540">
    <property type="entry name" value="P-loop containing nucleoside triphosphate hydrolases"/>
    <property type="match status" value="1"/>
</dbReference>
<dbReference type="PROSITE" id="PS00211">
    <property type="entry name" value="ABC_TRANSPORTER_1"/>
    <property type="match status" value="1"/>
</dbReference>
<dbReference type="PROSITE" id="PS50893">
    <property type="entry name" value="ABC_TRANSPORTER_2"/>
    <property type="match status" value="1"/>
</dbReference>
<dbReference type="PROSITE" id="PS51247">
    <property type="entry name" value="NIKD"/>
    <property type="match status" value="1"/>
</dbReference>